<feature type="chain" id="PRO_1000073416" description="Large ribosomal subunit protein uL13">
    <location>
        <begin position="1"/>
        <end position="145"/>
    </location>
</feature>
<sequence length="145" mass="16333">MRQTFMANESNIERKWYVIDAEGQTLGRLSSEVASILRGKNKVTYTPHVDTGDYVIVINASKIEFTGNKETDKVYYRHSNHPGGIKSITAGELRRTNPERLIENSIKGMLPSTRLGEKQGKKLFVYGGAEHPHAAQQPENYELRG</sequence>
<reference key="1">
    <citation type="journal article" date="2008" name="J. Bacteriol.">
        <title>Genome sequence of Staphylococcus aureus strain Newman and comparative analysis of staphylococcal genomes: polymorphism and evolution of two major pathogenicity islands.</title>
        <authorList>
            <person name="Baba T."/>
            <person name="Bae T."/>
            <person name="Schneewind O."/>
            <person name="Takeuchi F."/>
            <person name="Hiramatsu K."/>
        </authorList>
    </citation>
    <scope>NUCLEOTIDE SEQUENCE [LARGE SCALE GENOMIC DNA]</scope>
    <source>
        <strain>Newman</strain>
    </source>
</reference>
<dbReference type="EMBL" id="AP009351">
    <property type="protein sequence ID" value="BAF68392.1"/>
    <property type="molecule type" value="Genomic_DNA"/>
</dbReference>
<dbReference type="RefSeq" id="WP_001250038.1">
    <property type="nucleotide sequence ID" value="NZ_JBBIAE010000006.1"/>
</dbReference>
<dbReference type="SMR" id="A6QJ60"/>
<dbReference type="GeneID" id="98346530"/>
<dbReference type="KEGG" id="sae:NWMN_2120"/>
<dbReference type="HOGENOM" id="CLU_082184_2_2_9"/>
<dbReference type="Proteomes" id="UP000006386">
    <property type="component" value="Chromosome"/>
</dbReference>
<dbReference type="GO" id="GO:0022625">
    <property type="term" value="C:cytosolic large ribosomal subunit"/>
    <property type="evidence" value="ECO:0007669"/>
    <property type="project" value="TreeGrafter"/>
</dbReference>
<dbReference type="GO" id="GO:0003729">
    <property type="term" value="F:mRNA binding"/>
    <property type="evidence" value="ECO:0007669"/>
    <property type="project" value="TreeGrafter"/>
</dbReference>
<dbReference type="GO" id="GO:0003735">
    <property type="term" value="F:structural constituent of ribosome"/>
    <property type="evidence" value="ECO:0007669"/>
    <property type="project" value="InterPro"/>
</dbReference>
<dbReference type="GO" id="GO:0017148">
    <property type="term" value="P:negative regulation of translation"/>
    <property type="evidence" value="ECO:0007669"/>
    <property type="project" value="TreeGrafter"/>
</dbReference>
<dbReference type="GO" id="GO:0006412">
    <property type="term" value="P:translation"/>
    <property type="evidence" value="ECO:0007669"/>
    <property type="project" value="UniProtKB-UniRule"/>
</dbReference>
<dbReference type="CDD" id="cd00392">
    <property type="entry name" value="Ribosomal_L13"/>
    <property type="match status" value="1"/>
</dbReference>
<dbReference type="FunFam" id="3.90.1180.10:FF:000001">
    <property type="entry name" value="50S ribosomal protein L13"/>
    <property type="match status" value="1"/>
</dbReference>
<dbReference type="Gene3D" id="3.90.1180.10">
    <property type="entry name" value="Ribosomal protein L13"/>
    <property type="match status" value="1"/>
</dbReference>
<dbReference type="HAMAP" id="MF_01366">
    <property type="entry name" value="Ribosomal_uL13"/>
    <property type="match status" value="1"/>
</dbReference>
<dbReference type="InterPro" id="IPR005822">
    <property type="entry name" value="Ribosomal_uL13"/>
</dbReference>
<dbReference type="InterPro" id="IPR005823">
    <property type="entry name" value="Ribosomal_uL13_bac-type"/>
</dbReference>
<dbReference type="InterPro" id="IPR023563">
    <property type="entry name" value="Ribosomal_uL13_CS"/>
</dbReference>
<dbReference type="InterPro" id="IPR036899">
    <property type="entry name" value="Ribosomal_uL13_sf"/>
</dbReference>
<dbReference type="NCBIfam" id="TIGR01066">
    <property type="entry name" value="rplM_bact"/>
    <property type="match status" value="1"/>
</dbReference>
<dbReference type="PANTHER" id="PTHR11545:SF2">
    <property type="entry name" value="LARGE RIBOSOMAL SUBUNIT PROTEIN UL13M"/>
    <property type="match status" value="1"/>
</dbReference>
<dbReference type="PANTHER" id="PTHR11545">
    <property type="entry name" value="RIBOSOMAL PROTEIN L13"/>
    <property type="match status" value="1"/>
</dbReference>
<dbReference type="Pfam" id="PF00572">
    <property type="entry name" value="Ribosomal_L13"/>
    <property type="match status" value="1"/>
</dbReference>
<dbReference type="PIRSF" id="PIRSF002181">
    <property type="entry name" value="Ribosomal_L13"/>
    <property type="match status" value="1"/>
</dbReference>
<dbReference type="SUPFAM" id="SSF52161">
    <property type="entry name" value="Ribosomal protein L13"/>
    <property type="match status" value="1"/>
</dbReference>
<dbReference type="PROSITE" id="PS00783">
    <property type="entry name" value="RIBOSOMAL_L13"/>
    <property type="match status" value="1"/>
</dbReference>
<organism>
    <name type="scientific">Staphylococcus aureus (strain Newman)</name>
    <dbReference type="NCBI Taxonomy" id="426430"/>
    <lineage>
        <taxon>Bacteria</taxon>
        <taxon>Bacillati</taxon>
        <taxon>Bacillota</taxon>
        <taxon>Bacilli</taxon>
        <taxon>Bacillales</taxon>
        <taxon>Staphylococcaceae</taxon>
        <taxon>Staphylococcus</taxon>
    </lineage>
</organism>
<protein>
    <recommendedName>
        <fullName evidence="1">Large ribosomal subunit protein uL13</fullName>
    </recommendedName>
    <alternativeName>
        <fullName evidence="2">50S ribosomal protein L13</fullName>
    </alternativeName>
</protein>
<gene>
    <name evidence="1" type="primary">rplM</name>
    <name type="ordered locus">NWMN_2120</name>
</gene>
<comment type="function">
    <text evidence="1">This protein is one of the early assembly proteins of the 50S ribosomal subunit, although it is not seen to bind rRNA by itself. It is important during the early stages of 50S assembly.</text>
</comment>
<comment type="subunit">
    <text evidence="1">Part of the 50S ribosomal subunit.</text>
</comment>
<comment type="similarity">
    <text evidence="1">Belongs to the universal ribosomal protein uL13 family.</text>
</comment>
<evidence type="ECO:0000255" key="1">
    <source>
        <dbReference type="HAMAP-Rule" id="MF_01366"/>
    </source>
</evidence>
<evidence type="ECO:0000305" key="2"/>
<accession>A6QJ60</accession>
<keyword id="KW-0687">Ribonucleoprotein</keyword>
<keyword id="KW-0689">Ribosomal protein</keyword>
<name>RL13_STAAE</name>
<proteinExistence type="inferred from homology"/>